<comment type="function">
    <text evidence="1">PsaA and PsaB bind P700, the primary electron donor of photosystem I (PSI), as well as the electron acceptors A0, A1 and FX. PSI is a plastocyanin-ferredoxin oxidoreductase, converting photonic excitation into a charge separation, which transfers an electron from the donor P700 chlorophyll pair to the spectroscopically characterized acceptors A0, A1, FX, FA and FB in turn. Oxidized P700 is reduced on the lumenal side of the thylakoid membrane by plastocyanin.</text>
</comment>
<comment type="catalytic activity">
    <reaction evidence="1">
        <text>reduced [plastocyanin] + hnu + oxidized [2Fe-2S]-[ferredoxin] = oxidized [plastocyanin] + reduced [2Fe-2S]-[ferredoxin]</text>
        <dbReference type="Rhea" id="RHEA:30407"/>
        <dbReference type="Rhea" id="RHEA-COMP:10000"/>
        <dbReference type="Rhea" id="RHEA-COMP:10001"/>
        <dbReference type="Rhea" id="RHEA-COMP:10039"/>
        <dbReference type="Rhea" id="RHEA-COMP:10040"/>
        <dbReference type="ChEBI" id="CHEBI:29036"/>
        <dbReference type="ChEBI" id="CHEBI:30212"/>
        <dbReference type="ChEBI" id="CHEBI:33737"/>
        <dbReference type="ChEBI" id="CHEBI:33738"/>
        <dbReference type="ChEBI" id="CHEBI:49552"/>
        <dbReference type="EC" id="1.97.1.12"/>
    </reaction>
</comment>
<comment type="cofactor">
    <text evidence="1">P700 is a chlorophyll a/chlorophyll a' dimer, A0 is one or more chlorophyll a, A1 is one or both phylloquinones and FX is a shared 4Fe-4S iron-sulfur center.</text>
</comment>
<comment type="subunit">
    <text evidence="1">The PsaA/B heterodimer binds the P700 chlorophyll special pair and subsequent electron acceptors. PSI consists of a core antenna complex that captures photons, and an electron transfer chain that converts photonic excitation into a charge separation. The eukaryotic PSI reaction center is composed of at least 11 subunits.</text>
</comment>
<comment type="subcellular location">
    <subcellularLocation>
        <location evidence="1">Plastid</location>
        <location evidence="1">Chloroplast thylakoid membrane</location>
        <topology evidence="1">Multi-pass membrane protein</topology>
    </subcellularLocation>
</comment>
<comment type="similarity">
    <text evidence="1">Belongs to the PsaA/PsaB family.</text>
</comment>
<gene>
    <name evidence="1" type="primary">psaB</name>
</gene>
<protein>
    <recommendedName>
        <fullName evidence="1">Photosystem I P700 chlorophyll a apoprotein A2</fullName>
        <ecNumber evidence="1">1.97.1.12</ecNumber>
    </recommendedName>
    <alternativeName>
        <fullName evidence="1">PSI-B</fullName>
    </alternativeName>
    <alternativeName>
        <fullName evidence="1">PsaB</fullName>
    </alternativeName>
</protein>
<feature type="chain" id="PRO_0000300034" description="Photosystem I P700 chlorophyll a apoprotein A2">
    <location>
        <begin position="1"/>
        <end position="734"/>
    </location>
</feature>
<feature type="transmembrane region" description="Helical; Name=I" evidence="1">
    <location>
        <begin position="46"/>
        <end position="69"/>
    </location>
</feature>
<feature type="transmembrane region" description="Helical; Name=II" evidence="1">
    <location>
        <begin position="135"/>
        <end position="158"/>
    </location>
</feature>
<feature type="transmembrane region" description="Helical; Name=III" evidence="1">
    <location>
        <begin position="175"/>
        <end position="199"/>
    </location>
</feature>
<feature type="transmembrane region" description="Helical; Name=IV" evidence="1">
    <location>
        <begin position="273"/>
        <end position="291"/>
    </location>
</feature>
<feature type="transmembrane region" description="Helical; Name=V" evidence="1">
    <location>
        <begin position="330"/>
        <end position="353"/>
    </location>
</feature>
<feature type="transmembrane region" description="Helical; Name=VI" evidence="1">
    <location>
        <begin position="369"/>
        <end position="395"/>
    </location>
</feature>
<feature type="transmembrane region" description="Helical; Name=VII" evidence="1">
    <location>
        <begin position="417"/>
        <end position="439"/>
    </location>
</feature>
<feature type="transmembrane region" description="Helical; Name=VIII" evidence="1">
    <location>
        <begin position="517"/>
        <end position="535"/>
    </location>
</feature>
<feature type="transmembrane region" description="Helical; Name=IX" evidence="1">
    <location>
        <begin position="575"/>
        <end position="596"/>
    </location>
</feature>
<feature type="transmembrane region" description="Helical; Name=X" evidence="1">
    <location>
        <begin position="643"/>
        <end position="665"/>
    </location>
</feature>
<feature type="transmembrane region" description="Helical; Name=XI" evidence="1">
    <location>
        <begin position="707"/>
        <end position="727"/>
    </location>
</feature>
<feature type="binding site" evidence="1">
    <location>
        <position position="559"/>
    </location>
    <ligand>
        <name>[4Fe-4S] cluster</name>
        <dbReference type="ChEBI" id="CHEBI:49883"/>
        <note>ligand shared between dimeric partners</note>
    </ligand>
</feature>
<feature type="binding site" evidence="1">
    <location>
        <position position="568"/>
    </location>
    <ligand>
        <name>[4Fe-4S] cluster</name>
        <dbReference type="ChEBI" id="CHEBI:49883"/>
        <note>ligand shared between dimeric partners</note>
    </ligand>
</feature>
<feature type="binding site" description="axial binding residue" evidence="1">
    <location>
        <position position="654"/>
    </location>
    <ligand>
        <name>chlorophyll a</name>
        <dbReference type="ChEBI" id="CHEBI:58416"/>
        <label>B1</label>
    </ligand>
    <ligandPart>
        <name>Mg</name>
        <dbReference type="ChEBI" id="CHEBI:25107"/>
    </ligandPart>
</feature>
<feature type="binding site" description="axial binding residue" evidence="1">
    <location>
        <position position="662"/>
    </location>
    <ligand>
        <name>chlorophyll a</name>
        <dbReference type="ChEBI" id="CHEBI:58416"/>
        <label>B3</label>
    </ligand>
    <ligandPart>
        <name>Mg</name>
        <dbReference type="ChEBI" id="CHEBI:25107"/>
    </ligandPart>
</feature>
<feature type="binding site" evidence="1">
    <location>
        <position position="670"/>
    </location>
    <ligand>
        <name>chlorophyll a</name>
        <dbReference type="ChEBI" id="CHEBI:58416"/>
        <label>B3</label>
    </ligand>
</feature>
<feature type="binding site" evidence="1">
    <location>
        <position position="671"/>
    </location>
    <ligand>
        <name>phylloquinone</name>
        <dbReference type="ChEBI" id="CHEBI:18067"/>
        <label>B</label>
    </ligand>
</feature>
<keyword id="KW-0004">4Fe-4S</keyword>
<keyword id="KW-0148">Chlorophyll</keyword>
<keyword id="KW-0150">Chloroplast</keyword>
<keyword id="KW-0157">Chromophore</keyword>
<keyword id="KW-0249">Electron transport</keyword>
<keyword id="KW-0408">Iron</keyword>
<keyword id="KW-0411">Iron-sulfur</keyword>
<keyword id="KW-0460">Magnesium</keyword>
<keyword id="KW-0472">Membrane</keyword>
<keyword id="KW-0479">Metal-binding</keyword>
<keyword id="KW-0560">Oxidoreductase</keyword>
<keyword id="KW-0602">Photosynthesis</keyword>
<keyword id="KW-0603">Photosystem I</keyword>
<keyword id="KW-0934">Plastid</keyword>
<keyword id="KW-0793">Thylakoid</keyword>
<keyword id="KW-0812">Transmembrane</keyword>
<keyword id="KW-1133">Transmembrane helix</keyword>
<keyword id="KW-0813">Transport</keyword>
<geneLocation type="chloroplast"/>
<dbReference type="EC" id="1.97.1.12" evidence="1"/>
<dbReference type="EMBL" id="AP009369">
    <property type="protein sequence ID" value="BAF50022.1"/>
    <property type="molecule type" value="Genomic_DNA"/>
</dbReference>
<dbReference type="RefSeq" id="YP_001123198.1">
    <property type="nucleotide sequence ID" value="NC_009268.1"/>
</dbReference>
<dbReference type="SMR" id="A4QK17"/>
<dbReference type="GeneID" id="4962504"/>
<dbReference type="GO" id="GO:0009535">
    <property type="term" value="C:chloroplast thylakoid membrane"/>
    <property type="evidence" value="ECO:0007669"/>
    <property type="project" value="UniProtKB-SubCell"/>
</dbReference>
<dbReference type="GO" id="GO:0009522">
    <property type="term" value="C:photosystem I"/>
    <property type="evidence" value="ECO:0007669"/>
    <property type="project" value="UniProtKB-KW"/>
</dbReference>
<dbReference type="GO" id="GO:0051539">
    <property type="term" value="F:4 iron, 4 sulfur cluster binding"/>
    <property type="evidence" value="ECO:0007669"/>
    <property type="project" value="UniProtKB-KW"/>
</dbReference>
<dbReference type="GO" id="GO:0016168">
    <property type="term" value="F:chlorophyll binding"/>
    <property type="evidence" value="ECO:0007669"/>
    <property type="project" value="UniProtKB-KW"/>
</dbReference>
<dbReference type="GO" id="GO:0009055">
    <property type="term" value="F:electron transfer activity"/>
    <property type="evidence" value="ECO:0007669"/>
    <property type="project" value="UniProtKB-UniRule"/>
</dbReference>
<dbReference type="GO" id="GO:0000287">
    <property type="term" value="F:magnesium ion binding"/>
    <property type="evidence" value="ECO:0007669"/>
    <property type="project" value="UniProtKB-UniRule"/>
</dbReference>
<dbReference type="GO" id="GO:0016491">
    <property type="term" value="F:oxidoreductase activity"/>
    <property type="evidence" value="ECO:0007669"/>
    <property type="project" value="UniProtKB-KW"/>
</dbReference>
<dbReference type="GO" id="GO:0015979">
    <property type="term" value="P:photosynthesis"/>
    <property type="evidence" value="ECO:0007669"/>
    <property type="project" value="UniProtKB-UniRule"/>
</dbReference>
<dbReference type="FunFam" id="1.20.1130.10:FF:000001">
    <property type="entry name" value="Photosystem I P700 chlorophyll a apoprotein A2"/>
    <property type="match status" value="1"/>
</dbReference>
<dbReference type="Gene3D" id="1.20.1130.10">
    <property type="entry name" value="Photosystem I PsaA/PsaB"/>
    <property type="match status" value="1"/>
</dbReference>
<dbReference type="HAMAP" id="MF_00482">
    <property type="entry name" value="PSI_PsaB"/>
    <property type="match status" value="1"/>
</dbReference>
<dbReference type="InterPro" id="IPR001280">
    <property type="entry name" value="PSI_PsaA/B"/>
</dbReference>
<dbReference type="InterPro" id="IPR020586">
    <property type="entry name" value="PSI_PsaA/B_CS"/>
</dbReference>
<dbReference type="InterPro" id="IPR036408">
    <property type="entry name" value="PSI_PsaA/B_sf"/>
</dbReference>
<dbReference type="InterPro" id="IPR006244">
    <property type="entry name" value="PSI_PsaB"/>
</dbReference>
<dbReference type="NCBIfam" id="TIGR01336">
    <property type="entry name" value="psaB"/>
    <property type="match status" value="1"/>
</dbReference>
<dbReference type="PANTHER" id="PTHR30128">
    <property type="entry name" value="OUTER MEMBRANE PROTEIN, OMPA-RELATED"/>
    <property type="match status" value="1"/>
</dbReference>
<dbReference type="PANTHER" id="PTHR30128:SF19">
    <property type="entry name" value="PHOTOSYSTEM I P700 CHLOROPHYLL A APOPROTEIN A1-RELATED"/>
    <property type="match status" value="1"/>
</dbReference>
<dbReference type="Pfam" id="PF00223">
    <property type="entry name" value="PsaA_PsaB"/>
    <property type="match status" value="1"/>
</dbReference>
<dbReference type="PIRSF" id="PIRSF002905">
    <property type="entry name" value="PSI_A"/>
    <property type="match status" value="1"/>
</dbReference>
<dbReference type="PRINTS" id="PR00257">
    <property type="entry name" value="PHOTSYSPSAAB"/>
</dbReference>
<dbReference type="SUPFAM" id="SSF81558">
    <property type="entry name" value="Photosystem I subunits PsaA/PsaB"/>
    <property type="match status" value="1"/>
</dbReference>
<dbReference type="PROSITE" id="PS00419">
    <property type="entry name" value="PHOTOSYSTEM_I_PSAAB"/>
    <property type="match status" value="1"/>
</dbReference>
<name>PSAB_ARAHI</name>
<organism>
    <name type="scientific">Arabis hirsuta</name>
    <name type="common">Hairy rock-cress</name>
    <name type="synonym">Turritis hirsuta</name>
    <dbReference type="NCBI Taxonomy" id="78191"/>
    <lineage>
        <taxon>Eukaryota</taxon>
        <taxon>Viridiplantae</taxon>
        <taxon>Streptophyta</taxon>
        <taxon>Embryophyta</taxon>
        <taxon>Tracheophyta</taxon>
        <taxon>Spermatophyta</taxon>
        <taxon>Magnoliopsida</taxon>
        <taxon>eudicotyledons</taxon>
        <taxon>Gunneridae</taxon>
        <taxon>Pentapetalae</taxon>
        <taxon>rosids</taxon>
        <taxon>malvids</taxon>
        <taxon>Brassicales</taxon>
        <taxon>Brassicaceae</taxon>
        <taxon>Arabideae</taxon>
        <taxon>Arabis</taxon>
    </lineage>
</organism>
<proteinExistence type="inferred from homology"/>
<evidence type="ECO:0000255" key="1">
    <source>
        <dbReference type="HAMAP-Rule" id="MF_00482"/>
    </source>
</evidence>
<sequence length="734" mass="82516">MALRFPRFSQGLAQDPTTRRIWFGIATAHDFESHDDITEERLYQNIFASHFGQLAIIFLWTSGNLFHVAWQGNFETWIQDPLHVRPIAHAIWDPHFGQPAVEAFTRGGALGPVNIAYSGVYQWWYTIGLRTNEDLYTGALFLLFLSALSLIGGWLHLQPKWKPRVSWFKNAESRLNHHLSGLFGVSSLAWTGHLVHVAIPASRGEYVRWNNFLNVLPHPQGLGPLFTGQWNLYAQNPDSSSHLFGTSQGSGTAILTLLGGFHPQTQSLWLTDMAHHHLAIAILFLIAGHMYRTNFGIGHSIKDLLEAHIPPGGRLGRGHKGLYDTINNSIHFQLGLALASLGVITSLVAQHMYSLPAYAFIAQDFTTQAALYTHHQYIAGFIMTGAFAHGAIFFIRDYNPEQNEDNVLARMLDHKEAIISHLSWASLFLGFHTLGLYVHNDVMLAFGTPEKQILIEPIFAQWIQSAHGKTSYGFDVLLSSTNGPAFNAGRSIWLPGWLNAINENSNSLFLTIGPGDFLVHHAIALGLHTTTLILVKGALDARGSKLMPDKKDFGYSFPCDGPGRGGTCDISAWDAFYLAVFWMLNTIGWVTFYWHWKHITLWQGNVSQFNESSTYLMGWLRDYLWLNSSQLINGYNPFGMNSLSVWAWMFLFGHLVWATGFMFLISWRGYWQELIETLAWAHERTPLANLIRWKDKPVALSIVQARLVGLAHFSVGYIFTYAAFLIASTSGKFG</sequence>
<reference key="1">
    <citation type="submission" date="2007-03" db="EMBL/GenBank/DDBJ databases">
        <title>Sequencing analysis of Arabis hirsuta chloroplast DNA.</title>
        <authorList>
            <person name="Hosouchi T."/>
            <person name="Tsuruoka H."/>
            <person name="Kotani H."/>
        </authorList>
    </citation>
    <scope>NUCLEOTIDE SEQUENCE [LARGE SCALE GENOMIC DNA]</scope>
</reference>
<accession>A4QK17</accession>